<proteinExistence type="evidence at protein level"/>
<protein>
    <recommendedName>
        <fullName evidence="5">Early boundary activity protein 1</fullName>
    </recommendedName>
    <alternativeName>
        <fullName evidence="6">Blastoderm-specific gene 25A</fullName>
    </alternativeName>
</protein>
<name>ELBA1_DROME</name>
<gene>
    <name evidence="5 7" type="primary">Elba1</name>
    <name evidence="6" type="synonym">Bsg25A</name>
    <name evidence="7" type="ORF">CG12205</name>
</gene>
<keyword id="KW-0002">3D-structure</keyword>
<keyword id="KW-0238">DNA-binding</keyword>
<keyword id="KW-0539">Nucleus</keyword>
<keyword id="KW-1185">Reference proteome</keyword>
<keyword id="KW-0678">Repressor</keyword>
<keyword id="KW-0804">Transcription</keyword>
<keyword id="KW-0805">Transcription regulation</keyword>
<reference key="1">
    <citation type="journal article" date="2000" name="Science">
        <title>The genome sequence of Drosophila melanogaster.</title>
        <authorList>
            <person name="Adams M.D."/>
            <person name="Celniker S.E."/>
            <person name="Holt R.A."/>
            <person name="Evans C.A."/>
            <person name="Gocayne J.D."/>
            <person name="Amanatides P.G."/>
            <person name="Scherer S.E."/>
            <person name="Li P.W."/>
            <person name="Hoskins R.A."/>
            <person name="Galle R.F."/>
            <person name="George R.A."/>
            <person name="Lewis S.E."/>
            <person name="Richards S."/>
            <person name="Ashburner M."/>
            <person name="Henderson S.N."/>
            <person name="Sutton G.G."/>
            <person name="Wortman J.R."/>
            <person name="Yandell M.D."/>
            <person name="Zhang Q."/>
            <person name="Chen L.X."/>
            <person name="Brandon R.C."/>
            <person name="Rogers Y.-H.C."/>
            <person name="Blazej R.G."/>
            <person name="Champe M."/>
            <person name="Pfeiffer B.D."/>
            <person name="Wan K.H."/>
            <person name="Doyle C."/>
            <person name="Baxter E.G."/>
            <person name="Helt G."/>
            <person name="Nelson C.R."/>
            <person name="Miklos G.L.G."/>
            <person name="Abril J.F."/>
            <person name="Agbayani A."/>
            <person name="An H.-J."/>
            <person name="Andrews-Pfannkoch C."/>
            <person name="Baldwin D."/>
            <person name="Ballew R.M."/>
            <person name="Basu A."/>
            <person name="Baxendale J."/>
            <person name="Bayraktaroglu L."/>
            <person name="Beasley E.M."/>
            <person name="Beeson K.Y."/>
            <person name="Benos P.V."/>
            <person name="Berman B.P."/>
            <person name="Bhandari D."/>
            <person name="Bolshakov S."/>
            <person name="Borkova D."/>
            <person name="Botchan M.R."/>
            <person name="Bouck J."/>
            <person name="Brokstein P."/>
            <person name="Brottier P."/>
            <person name="Burtis K.C."/>
            <person name="Busam D.A."/>
            <person name="Butler H."/>
            <person name="Cadieu E."/>
            <person name="Center A."/>
            <person name="Chandra I."/>
            <person name="Cherry J.M."/>
            <person name="Cawley S."/>
            <person name="Dahlke C."/>
            <person name="Davenport L.B."/>
            <person name="Davies P."/>
            <person name="de Pablos B."/>
            <person name="Delcher A."/>
            <person name="Deng Z."/>
            <person name="Mays A.D."/>
            <person name="Dew I."/>
            <person name="Dietz S.M."/>
            <person name="Dodson K."/>
            <person name="Doup L.E."/>
            <person name="Downes M."/>
            <person name="Dugan-Rocha S."/>
            <person name="Dunkov B.C."/>
            <person name="Dunn P."/>
            <person name="Durbin K.J."/>
            <person name="Evangelista C.C."/>
            <person name="Ferraz C."/>
            <person name="Ferriera S."/>
            <person name="Fleischmann W."/>
            <person name="Fosler C."/>
            <person name="Gabrielian A.E."/>
            <person name="Garg N.S."/>
            <person name="Gelbart W.M."/>
            <person name="Glasser K."/>
            <person name="Glodek A."/>
            <person name="Gong F."/>
            <person name="Gorrell J.H."/>
            <person name="Gu Z."/>
            <person name="Guan P."/>
            <person name="Harris M."/>
            <person name="Harris N.L."/>
            <person name="Harvey D.A."/>
            <person name="Heiman T.J."/>
            <person name="Hernandez J.R."/>
            <person name="Houck J."/>
            <person name="Hostin D."/>
            <person name="Houston K.A."/>
            <person name="Howland T.J."/>
            <person name="Wei M.-H."/>
            <person name="Ibegwam C."/>
            <person name="Jalali M."/>
            <person name="Kalush F."/>
            <person name="Karpen G.H."/>
            <person name="Ke Z."/>
            <person name="Kennison J.A."/>
            <person name="Ketchum K.A."/>
            <person name="Kimmel B.E."/>
            <person name="Kodira C.D."/>
            <person name="Kraft C.L."/>
            <person name="Kravitz S."/>
            <person name="Kulp D."/>
            <person name="Lai Z."/>
            <person name="Lasko P."/>
            <person name="Lei Y."/>
            <person name="Levitsky A.A."/>
            <person name="Li J.H."/>
            <person name="Li Z."/>
            <person name="Liang Y."/>
            <person name="Lin X."/>
            <person name="Liu X."/>
            <person name="Mattei B."/>
            <person name="McIntosh T.C."/>
            <person name="McLeod M.P."/>
            <person name="McPherson D."/>
            <person name="Merkulov G."/>
            <person name="Milshina N.V."/>
            <person name="Mobarry C."/>
            <person name="Morris J."/>
            <person name="Moshrefi A."/>
            <person name="Mount S.M."/>
            <person name="Moy M."/>
            <person name="Murphy B."/>
            <person name="Murphy L."/>
            <person name="Muzny D.M."/>
            <person name="Nelson D.L."/>
            <person name="Nelson D.R."/>
            <person name="Nelson K.A."/>
            <person name="Nixon K."/>
            <person name="Nusskern D.R."/>
            <person name="Pacleb J.M."/>
            <person name="Palazzolo M."/>
            <person name="Pittman G.S."/>
            <person name="Pan S."/>
            <person name="Pollard J."/>
            <person name="Puri V."/>
            <person name="Reese M.G."/>
            <person name="Reinert K."/>
            <person name="Remington K."/>
            <person name="Saunders R.D.C."/>
            <person name="Scheeler F."/>
            <person name="Shen H."/>
            <person name="Shue B.C."/>
            <person name="Siden-Kiamos I."/>
            <person name="Simpson M."/>
            <person name="Skupski M.P."/>
            <person name="Smith T.J."/>
            <person name="Spier E."/>
            <person name="Spradling A.C."/>
            <person name="Stapleton M."/>
            <person name="Strong R."/>
            <person name="Sun E."/>
            <person name="Svirskas R."/>
            <person name="Tector C."/>
            <person name="Turner R."/>
            <person name="Venter E."/>
            <person name="Wang A.H."/>
            <person name="Wang X."/>
            <person name="Wang Z.-Y."/>
            <person name="Wassarman D.A."/>
            <person name="Weinstock G.M."/>
            <person name="Weissenbach J."/>
            <person name="Williams S.M."/>
            <person name="Woodage T."/>
            <person name="Worley K.C."/>
            <person name="Wu D."/>
            <person name="Yang S."/>
            <person name="Yao Q.A."/>
            <person name="Ye J."/>
            <person name="Yeh R.-F."/>
            <person name="Zaveri J.S."/>
            <person name="Zhan M."/>
            <person name="Zhang G."/>
            <person name="Zhao Q."/>
            <person name="Zheng L."/>
            <person name="Zheng X.H."/>
            <person name="Zhong F.N."/>
            <person name="Zhong W."/>
            <person name="Zhou X."/>
            <person name="Zhu S.C."/>
            <person name="Zhu X."/>
            <person name="Smith H.O."/>
            <person name="Gibbs R.A."/>
            <person name="Myers E.W."/>
            <person name="Rubin G.M."/>
            <person name="Venter J.C."/>
        </authorList>
    </citation>
    <scope>NUCLEOTIDE SEQUENCE [LARGE SCALE GENOMIC DNA]</scope>
    <source>
        <strain>Berkeley</strain>
    </source>
</reference>
<reference key="2">
    <citation type="journal article" date="2002" name="Genome Biol.">
        <title>Annotation of the Drosophila melanogaster euchromatic genome: a systematic review.</title>
        <authorList>
            <person name="Misra S."/>
            <person name="Crosby M.A."/>
            <person name="Mungall C.J."/>
            <person name="Matthews B.B."/>
            <person name="Campbell K.S."/>
            <person name="Hradecky P."/>
            <person name="Huang Y."/>
            <person name="Kaminker J.S."/>
            <person name="Millburn G.H."/>
            <person name="Prochnik S.E."/>
            <person name="Smith C.D."/>
            <person name="Tupy J.L."/>
            <person name="Whitfield E.J."/>
            <person name="Bayraktaroglu L."/>
            <person name="Berman B.P."/>
            <person name="Bettencourt B.R."/>
            <person name="Celniker S.E."/>
            <person name="de Grey A.D.N.J."/>
            <person name="Drysdale R.A."/>
            <person name="Harris N.L."/>
            <person name="Richter J."/>
            <person name="Russo S."/>
            <person name="Schroeder A.J."/>
            <person name="Shu S.Q."/>
            <person name="Stapleton M."/>
            <person name="Yamada C."/>
            <person name="Ashburner M."/>
            <person name="Gelbart W.M."/>
            <person name="Rubin G.M."/>
            <person name="Lewis S.E."/>
        </authorList>
    </citation>
    <scope>GENOME REANNOTATION</scope>
    <source>
        <strain>Berkeley</strain>
    </source>
</reference>
<reference key="3">
    <citation type="journal article" date="2002" name="Genome Biol.">
        <title>A Drosophila full-length cDNA resource.</title>
        <authorList>
            <person name="Stapleton M."/>
            <person name="Carlson J.W."/>
            <person name="Brokstein P."/>
            <person name="Yu C."/>
            <person name="Champe M."/>
            <person name="George R.A."/>
            <person name="Guarin H."/>
            <person name="Kronmiller B."/>
            <person name="Pacleb J.M."/>
            <person name="Park S."/>
            <person name="Wan K.H."/>
            <person name="Rubin G.M."/>
            <person name="Celniker S.E."/>
        </authorList>
    </citation>
    <scope>NUCLEOTIDE SEQUENCE [LARGE SCALE MRNA]</scope>
    <source>
        <strain>Berkeley</strain>
        <tissue>Embryo</tissue>
    </source>
</reference>
<reference key="4">
    <citation type="journal article" date="2012" name="Elife">
        <title>Elba, a novel developmentally regulated chromatin boundary factor is a hetero-tripartite DNA binding complex.</title>
        <authorList>
            <person name="Aoki T."/>
            <person name="Sarkeshik A."/>
            <person name="Yates J."/>
            <person name="Schedl P."/>
        </authorList>
    </citation>
    <scope>IDENTIFICATION BY MASS SPECTROMETRY</scope>
    <scope>FUNCTION</scope>
    <scope>SUBUNIT</scope>
    <scope>SUBCELLULAR LOCATION</scope>
    <scope>DEVELOPMENTAL STAGE</scope>
    <scope>DOMAIN BEN</scope>
    <scope>DNA-BINDING</scope>
</reference>
<reference key="5">
    <citation type="journal article" date="2015" name="Genes Dev.">
        <title>Common and distinct DNA-binding and regulatory activities of the BEN-solo transcription factor family.</title>
        <authorList>
            <person name="Dai Q."/>
            <person name="Ren A."/>
            <person name="Westholm J.O."/>
            <person name="Duan H."/>
            <person name="Patel D.J."/>
            <person name="Lai E.C."/>
        </authorList>
    </citation>
    <scope>X-RAY CRYSTALLOGRAPHY (3.21 ANGSTROMS) OF 250-358</scope>
    <scope>FUNCTION</scope>
    <scope>SUBCELLULAR LOCATION</scope>
    <scope>DEVELOPMENTAL STAGE</scope>
    <scope>DNA-BINDING</scope>
    <scope>DOMAIN BEN</scope>
</reference>
<organism>
    <name type="scientific">Drosophila melanogaster</name>
    <name type="common">Fruit fly</name>
    <dbReference type="NCBI Taxonomy" id="7227"/>
    <lineage>
        <taxon>Eukaryota</taxon>
        <taxon>Metazoa</taxon>
        <taxon>Ecdysozoa</taxon>
        <taxon>Arthropoda</taxon>
        <taxon>Hexapoda</taxon>
        <taxon>Insecta</taxon>
        <taxon>Pterygota</taxon>
        <taxon>Neoptera</taxon>
        <taxon>Endopterygota</taxon>
        <taxon>Diptera</taxon>
        <taxon>Brachycera</taxon>
        <taxon>Muscomorpha</taxon>
        <taxon>Ephydroidea</taxon>
        <taxon>Drosophilidae</taxon>
        <taxon>Drosophila</taxon>
        <taxon>Sophophora</taxon>
    </lineage>
</organism>
<comment type="function">
    <text evidence="3 4">The heterotrimeric Elba complex is required for chromatin domain boundary function during early embryogenesis. It binds to a 8-bp sequence 5'-CCAATAAG-3' in the Fab-7 insulator or boundary element in the bithorax complex and contributes to its insulator or boundary activity (PubMed:23240086). Elba1 may act as a transcriptional repressor and binds the palindromic sequence 5'-CCAATTGG-3' to mediate transcriptional repression (PubMed:25561495).</text>
</comment>
<comment type="subunit">
    <text evidence="3">The heterotrimeric Elba complex consists of Elba1, Elba2 and Elba3.</text>
</comment>
<comment type="subcellular location">
    <subcellularLocation>
        <location evidence="3 4">Nucleus</location>
    </subcellularLocation>
</comment>
<comment type="developmental stage">
    <text evidence="3 4">Expression is developmentally restricted, peaks at the blastoderm stage (2-4 hours) and then disappears (at protein level).</text>
</comment>
<comment type="domain">
    <text evidence="3 4">The BEN domain mediates DNA-binding.</text>
</comment>
<sequence>MINRRQRLEFALTLLPYDPETVQLSETQKKVEAIIARLRTDDSFTEEESDDCKVRRIQDANEFADSAMRHIEMSDSGKLSTLETLTLAAEKLLRTQRSPDQDFDDMVQDVEYSQLMRNTIQAVNEARLKLLQQWERSKRKALDLLTIEIEKVQEMDQEPEHKQSHEQDQDQEQSSEPFNAFRDGADEHNTSTPKTNDEDLGLDDDDEDYVPGGEETMGNKRKRIKKPVTSTPNAKRRCPGFEFDLDGESPMVTIGPNGTEVSRISLSAINWDMTGPSITRKLLCEIFDRDTLAHHTLSGKPSPAFRDCARPSKQQLDPLKVADLVYLMTNSLDMTPREVRTAITTKCADENKMLRSRMQRKSK</sequence>
<dbReference type="EMBL" id="AE014134">
    <property type="protein sequence ID" value="AAF50991.2"/>
    <property type="molecule type" value="Genomic_DNA"/>
</dbReference>
<dbReference type="EMBL" id="AY089611">
    <property type="protein sequence ID" value="AAL90349.1"/>
    <property type="molecule type" value="mRNA"/>
</dbReference>
<dbReference type="RefSeq" id="NP_523472.2">
    <property type="nucleotide sequence ID" value="NM_078748.3"/>
</dbReference>
<dbReference type="PDB" id="4X0G">
    <property type="method" value="X-ray"/>
    <property type="resolution" value="3.21 A"/>
    <property type="chains" value="A/B/C/D=250-358"/>
</dbReference>
<dbReference type="PDBsum" id="4X0G"/>
<dbReference type="SMR" id="Q9VR17"/>
<dbReference type="ComplexPortal" id="CPX-2439">
    <property type="entry name" value="ELBA boundary factor complex"/>
</dbReference>
<dbReference type="FunCoup" id="Q9VR17">
    <property type="interactions" value="40"/>
</dbReference>
<dbReference type="IntAct" id="Q9VR17">
    <property type="interactions" value="1"/>
</dbReference>
<dbReference type="STRING" id="7227.FBpp0077114"/>
<dbReference type="PaxDb" id="7227-FBpp0077114"/>
<dbReference type="DNASU" id="33669"/>
<dbReference type="EnsemblMetazoa" id="FBtr0077423">
    <property type="protein sequence ID" value="FBpp0077114"/>
    <property type="gene ID" value="FBgn0000227"/>
</dbReference>
<dbReference type="GeneID" id="33669"/>
<dbReference type="KEGG" id="dme:Dmel_CG12205"/>
<dbReference type="UCSC" id="CG12205-RA">
    <property type="organism name" value="d. melanogaster"/>
</dbReference>
<dbReference type="AGR" id="FB:FBgn0000227"/>
<dbReference type="CTD" id="33669"/>
<dbReference type="FlyBase" id="FBgn0000227">
    <property type="gene designation" value="Elba1"/>
</dbReference>
<dbReference type="VEuPathDB" id="VectorBase:FBgn0000227"/>
<dbReference type="eggNOG" id="ENOG502TBXG">
    <property type="taxonomic scope" value="Eukaryota"/>
</dbReference>
<dbReference type="GeneTree" id="ENSGT00530000069528"/>
<dbReference type="HOGENOM" id="CLU_750683_0_0_1"/>
<dbReference type="InParanoid" id="Q9VR17"/>
<dbReference type="OMA" id="HFEMFRD"/>
<dbReference type="OrthoDB" id="8186171at2759"/>
<dbReference type="PhylomeDB" id="Q9VR17"/>
<dbReference type="BioGRID-ORCS" id="33669">
    <property type="hits" value="0 hits in 1 CRISPR screen"/>
</dbReference>
<dbReference type="EvolutionaryTrace" id="Q9VR17"/>
<dbReference type="GenomeRNAi" id="33669"/>
<dbReference type="PRO" id="PR:Q9VR17"/>
<dbReference type="Proteomes" id="UP000000803">
    <property type="component" value="Chromosome 2L"/>
</dbReference>
<dbReference type="Bgee" id="FBgn0000227">
    <property type="expression patterns" value="Expressed in cleaving embryo and 7 other cell types or tissues"/>
</dbReference>
<dbReference type="ExpressionAtlas" id="Q9VR17">
    <property type="expression patterns" value="baseline and differential"/>
</dbReference>
<dbReference type="GO" id="GO:0005677">
    <property type="term" value="C:chromatin silencing complex"/>
    <property type="evidence" value="ECO:0000314"/>
    <property type="project" value="FlyBase"/>
</dbReference>
<dbReference type="GO" id="GO:0005634">
    <property type="term" value="C:nucleus"/>
    <property type="evidence" value="ECO:0000314"/>
    <property type="project" value="UniProtKB"/>
</dbReference>
<dbReference type="GO" id="GO:0043035">
    <property type="term" value="F:chromatin insulator sequence binding"/>
    <property type="evidence" value="ECO:0000314"/>
    <property type="project" value="FlyBase"/>
</dbReference>
<dbReference type="GO" id="GO:0043565">
    <property type="term" value="F:sequence-specific DNA binding"/>
    <property type="evidence" value="ECO:0000314"/>
    <property type="project" value="UniProtKB"/>
</dbReference>
<dbReference type="GO" id="GO:0003714">
    <property type="term" value="F:transcription corepressor activity"/>
    <property type="evidence" value="ECO:0007669"/>
    <property type="project" value="InterPro"/>
</dbReference>
<dbReference type="GO" id="GO:0001700">
    <property type="term" value="P:embryonic development via the syncytial blastoderm"/>
    <property type="evidence" value="ECO:0000270"/>
    <property type="project" value="FlyBase"/>
</dbReference>
<dbReference type="GO" id="GO:0033696">
    <property type="term" value="P:heterochromatin boundary formation"/>
    <property type="evidence" value="ECO:0000315"/>
    <property type="project" value="FlyBase"/>
</dbReference>
<dbReference type="GO" id="GO:0045746">
    <property type="term" value="P:negative regulation of Notch signaling pathway"/>
    <property type="evidence" value="ECO:0007669"/>
    <property type="project" value="InterPro"/>
</dbReference>
<dbReference type="GO" id="GO:0045666">
    <property type="term" value="P:positive regulation of neuron differentiation"/>
    <property type="evidence" value="ECO:0007669"/>
    <property type="project" value="InterPro"/>
</dbReference>
<dbReference type="FunFam" id="1.10.10.2590:FF:000005">
    <property type="entry name" value="Early boundary activity protein 1"/>
    <property type="match status" value="1"/>
</dbReference>
<dbReference type="Gene3D" id="1.10.10.2590">
    <property type="entry name" value="BEN domain"/>
    <property type="match status" value="1"/>
</dbReference>
<dbReference type="InterPro" id="IPR018379">
    <property type="entry name" value="BEN_domain"/>
</dbReference>
<dbReference type="InterPro" id="IPR037496">
    <property type="entry name" value="BEND6-like"/>
</dbReference>
<dbReference type="PANTHER" id="PTHR35346">
    <property type="entry name" value="BEN DOMAIN-CONTAINING PROTEIN 6"/>
    <property type="match status" value="1"/>
</dbReference>
<dbReference type="PANTHER" id="PTHR35346:SF1">
    <property type="entry name" value="BEN DOMAIN-CONTAINING PROTEIN 6"/>
    <property type="match status" value="1"/>
</dbReference>
<dbReference type="Pfam" id="PF10523">
    <property type="entry name" value="BEN"/>
    <property type="match status" value="1"/>
</dbReference>
<dbReference type="SMART" id="SM01025">
    <property type="entry name" value="BEN"/>
    <property type="match status" value="1"/>
</dbReference>
<dbReference type="PROSITE" id="PS51457">
    <property type="entry name" value="BEN"/>
    <property type="match status" value="1"/>
</dbReference>
<evidence type="ECO:0000255" key="1">
    <source>
        <dbReference type="PROSITE-ProRule" id="PRU00784"/>
    </source>
</evidence>
<evidence type="ECO:0000256" key="2">
    <source>
        <dbReference type="SAM" id="MobiDB-lite"/>
    </source>
</evidence>
<evidence type="ECO:0000269" key="3">
    <source>
    </source>
</evidence>
<evidence type="ECO:0000269" key="4">
    <source>
    </source>
</evidence>
<evidence type="ECO:0000303" key="5">
    <source>
    </source>
</evidence>
<evidence type="ECO:0000303" key="6">
    <source>
    </source>
</evidence>
<evidence type="ECO:0000312" key="7">
    <source>
        <dbReference type="FlyBase" id="FBgn0000227"/>
    </source>
</evidence>
<evidence type="ECO:0007829" key="8">
    <source>
        <dbReference type="PDB" id="4X0G"/>
    </source>
</evidence>
<feature type="chain" id="PRO_0000434579" description="Early boundary activity protein 1">
    <location>
        <begin position="1"/>
        <end position="363"/>
    </location>
</feature>
<feature type="domain" description="BEN" evidence="1">
    <location>
        <begin position="255"/>
        <end position="354"/>
    </location>
</feature>
<feature type="region of interest" description="Disordered" evidence="2">
    <location>
        <begin position="155"/>
        <end position="242"/>
    </location>
</feature>
<feature type="compositionally biased region" description="Basic and acidic residues" evidence="2">
    <location>
        <begin position="155"/>
        <end position="168"/>
    </location>
</feature>
<feature type="compositionally biased region" description="Acidic residues" evidence="2">
    <location>
        <begin position="198"/>
        <end position="209"/>
    </location>
</feature>
<feature type="strand" evidence="8">
    <location>
        <begin position="251"/>
        <end position="253"/>
    </location>
</feature>
<feature type="strand" evidence="8">
    <location>
        <begin position="260"/>
        <end position="262"/>
    </location>
</feature>
<feature type="helix" evidence="8">
    <location>
        <begin position="263"/>
        <end position="267"/>
    </location>
</feature>
<feature type="helix" evidence="8">
    <location>
        <begin position="275"/>
        <end position="286"/>
    </location>
</feature>
<feature type="helix" evidence="8">
    <location>
        <begin position="289"/>
        <end position="292"/>
    </location>
</feature>
<feature type="strand" evidence="8">
    <location>
        <begin position="295"/>
        <end position="298"/>
    </location>
</feature>
<feature type="helix" evidence="8">
    <location>
        <begin position="303"/>
        <end position="305"/>
    </location>
</feature>
<feature type="strand" evidence="8">
    <location>
        <begin position="306"/>
        <end position="308"/>
    </location>
</feature>
<feature type="helix" evidence="8">
    <location>
        <begin position="318"/>
        <end position="330"/>
    </location>
</feature>
<feature type="helix" evidence="8">
    <location>
        <begin position="336"/>
        <end position="356"/>
    </location>
</feature>
<accession>Q9VR17</accession>
<accession>O01400</accession>
<accession>Q8SXI9</accession>